<feature type="chain" id="PRO_0000095449" description="Glutamate racemase">
    <location>
        <begin position="1"/>
        <end position="254"/>
    </location>
</feature>
<feature type="active site" description="Proton donor/acceptor" evidence="1 3">
    <location>
        <position position="70"/>
    </location>
</feature>
<feature type="active site" description="Proton donor/acceptor" evidence="1 3">
    <location>
        <position position="178"/>
    </location>
</feature>
<feature type="binding site" evidence="2 3">
    <location>
        <begin position="7"/>
        <end position="8"/>
    </location>
    <ligand>
        <name>substrate</name>
    </ligand>
</feature>
<feature type="binding site" evidence="2 3">
    <location>
        <begin position="39"/>
        <end position="40"/>
    </location>
    <ligand>
        <name>substrate</name>
    </ligand>
</feature>
<feature type="binding site" evidence="3 4 7">
    <location>
        <begin position="71"/>
        <end position="72"/>
    </location>
    <ligand>
        <name>substrate</name>
    </ligand>
</feature>
<feature type="binding site" evidence="4 7">
    <location>
        <position position="147"/>
    </location>
    <ligand>
        <name>substrate</name>
    </ligand>
</feature>
<feature type="binding site" evidence="2 3">
    <location>
        <begin position="179"/>
        <end position="180"/>
    </location>
    <ligand>
        <name>substrate</name>
    </ligand>
</feature>
<feature type="mutagenesis site" description="Strongly reduced catalytic activity." evidence="4">
    <original>D</original>
    <variation>S</variation>
    <location>
        <position position="7"/>
    </location>
</feature>
<feature type="mutagenesis site" description="Strongly reduced catalytic activity." evidence="4">
    <original>E</original>
    <variation>N</variation>
    <location>
        <position position="147"/>
    </location>
</feature>
<feature type="strand" evidence="8">
    <location>
        <begin position="2"/>
        <end position="10"/>
    </location>
</feature>
<feature type="helix" evidence="8">
    <location>
        <begin position="11"/>
        <end position="13"/>
    </location>
</feature>
<feature type="helix" evidence="8">
    <location>
        <begin position="15"/>
        <end position="22"/>
    </location>
</feature>
<feature type="strand" evidence="9">
    <location>
        <begin position="23"/>
        <end position="25"/>
    </location>
</feature>
<feature type="strand" evidence="8">
    <location>
        <begin position="27"/>
        <end position="32"/>
    </location>
</feature>
<feature type="turn" evidence="8">
    <location>
        <begin position="34"/>
        <end position="36"/>
    </location>
</feature>
<feature type="helix" evidence="9">
    <location>
        <begin position="39"/>
        <end position="41"/>
    </location>
</feature>
<feature type="helix" evidence="8">
    <location>
        <begin position="44"/>
        <end position="59"/>
    </location>
</feature>
<feature type="turn" evidence="8">
    <location>
        <begin position="60"/>
        <end position="62"/>
    </location>
</feature>
<feature type="strand" evidence="8">
    <location>
        <begin position="64"/>
        <end position="68"/>
    </location>
</feature>
<feature type="helix" evidence="8">
    <location>
        <begin position="71"/>
        <end position="74"/>
    </location>
</feature>
<feature type="helix" evidence="8">
    <location>
        <begin position="78"/>
        <end position="84"/>
    </location>
</feature>
<feature type="strand" evidence="8">
    <location>
        <begin position="85"/>
        <end position="87"/>
    </location>
</feature>
<feature type="strand" evidence="8">
    <location>
        <begin position="89"/>
        <end position="92"/>
    </location>
</feature>
<feature type="helix" evidence="8">
    <location>
        <begin position="93"/>
        <end position="103"/>
    </location>
</feature>
<feature type="strand" evidence="8">
    <location>
        <begin position="108"/>
        <end position="113"/>
    </location>
</feature>
<feature type="helix" evidence="8">
    <location>
        <begin position="115"/>
        <end position="120"/>
    </location>
</feature>
<feature type="helix" evidence="8">
    <location>
        <begin position="122"/>
        <end position="128"/>
    </location>
</feature>
<feature type="strand" evidence="8">
    <location>
        <begin position="133"/>
        <end position="138"/>
    </location>
</feature>
<feature type="turn" evidence="8">
    <location>
        <begin position="143"/>
        <end position="145"/>
    </location>
</feature>
<feature type="helix" evidence="8">
    <location>
        <begin position="148"/>
        <end position="151"/>
    </location>
</feature>
<feature type="helix" evidence="8">
    <location>
        <begin position="153"/>
        <end position="155"/>
    </location>
</feature>
<feature type="helix" evidence="8">
    <location>
        <begin position="156"/>
        <end position="163"/>
    </location>
</feature>
<feature type="turn" evidence="8">
    <location>
        <begin position="165"/>
        <end position="170"/>
    </location>
</feature>
<feature type="strand" evidence="8">
    <location>
        <begin position="172"/>
        <end position="176"/>
    </location>
</feature>
<feature type="helix" evidence="8">
    <location>
        <begin position="185"/>
        <end position="191"/>
    </location>
</feature>
<feature type="strand" evidence="8">
    <location>
        <begin position="196"/>
        <end position="198"/>
    </location>
</feature>
<feature type="helix" evidence="8">
    <location>
        <begin position="200"/>
        <end position="206"/>
    </location>
</feature>
<feature type="turn" evidence="8">
    <location>
        <begin position="207"/>
        <end position="211"/>
    </location>
</feature>
<feature type="strand" evidence="8">
    <location>
        <begin position="220"/>
        <end position="226"/>
    </location>
</feature>
<feature type="helix" evidence="8">
    <location>
        <begin position="231"/>
        <end position="239"/>
    </location>
</feature>
<feature type="strand" evidence="8">
    <location>
        <begin position="245"/>
        <end position="247"/>
    </location>
</feature>
<dbReference type="EC" id="5.1.1.3" evidence="3 4 5"/>
<dbReference type="EMBL" id="AF212972">
    <property type="protein sequence ID" value="AAF25672.1"/>
    <property type="molecule type" value="Genomic_DNA"/>
</dbReference>
<dbReference type="PDB" id="1B73">
    <property type="method" value="X-ray"/>
    <property type="resolution" value="2.30 A"/>
    <property type="chains" value="A=1-254"/>
</dbReference>
<dbReference type="PDB" id="1B74">
    <property type="method" value="X-ray"/>
    <property type="resolution" value="2.30 A"/>
    <property type="chains" value="A=1-254"/>
</dbReference>
<dbReference type="PDBsum" id="1B73"/>
<dbReference type="PDBsum" id="1B74"/>
<dbReference type="SMR" id="P56868"/>
<dbReference type="DrugBank" id="DB02174">
    <property type="generic name" value="D-Glutamine"/>
</dbReference>
<dbReference type="BRENDA" id="5.1.1.3">
    <property type="organism ID" value="397"/>
</dbReference>
<dbReference type="SABIO-RK" id="P56868"/>
<dbReference type="UniPathway" id="UPA00219"/>
<dbReference type="EvolutionaryTrace" id="P56868"/>
<dbReference type="GO" id="GO:0008881">
    <property type="term" value="F:glutamate racemase activity"/>
    <property type="evidence" value="ECO:0007669"/>
    <property type="project" value="UniProtKB-UniRule"/>
</dbReference>
<dbReference type="GO" id="GO:0071555">
    <property type="term" value="P:cell wall organization"/>
    <property type="evidence" value="ECO:0007669"/>
    <property type="project" value="UniProtKB-KW"/>
</dbReference>
<dbReference type="GO" id="GO:0009252">
    <property type="term" value="P:peptidoglycan biosynthetic process"/>
    <property type="evidence" value="ECO:0007669"/>
    <property type="project" value="UniProtKB-UniRule"/>
</dbReference>
<dbReference type="GO" id="GO:0008360">
    <property type="term" value="P:regulation of cell shape"/>
    <property type="evidence" value="ECO:0007669"/>
    <property type="project" value="UniProtKB-KW"/>
</dbReference>
<dbReference type="FunFam" id="3.40.50.1860:FF:000002">
    <property type="entry name" value="Glutamate racemase"/>
    <property type="match status" value="1"/>
</dbReference>
<dbReference type="Gene3D" id="3.40.50.1860">
    <property type="match status" value="2"/>
</dbReference>
<dbReference type="HAMAP" id="MF_00258">
    <property type="entry name" value="Glu_racemase"/>
    <property type="match status" value="1"/>
</dbReference>
<dbReference type="InterPro" id="IPR015942">
    <property type="entry name" value="Asp/Glu/hydantoin_racemase"/>
</dbReference>
<dbReference type="InterPro" id="IPR001920">
    <property type="entry name" value="Asp/Glu_race"/>
</dbReference>
<dbReference type="InterPro" id="IPR018187">
    <property type="entry name" value="Asp/Glu_racemase_AS_1"/>
</dbReference>
<dbReference type="InterPro" id="IPR033134">
    <property type="entry name" value="Asp/Glu_racemase_AS_2"/>
</dbReference>
<dbReference type="InterPro" id="IPR004391">
    <property type="entry name" value="Glu_race"/>
</dbReference>
<dbReference type="NCBIfam" id="TIGR00067">
    <property type="entry name" value="glut_race"/>
    <property type="match status" value="1"/>
</dbReference>
<dbReference type="PANTHER" id="PTHR21198">
    <property type="entry name" value="GLUTAMATE RACEMASE"/>
    <property type="match status" value="1"/>
</dbReference>
<dbReference type="PANTHER" id="PTHR21198:SF2">
    <property type="entry name" value="GLUTAMATE RACEMASE"/>
    <property type="match status" value="1"/>
</dbReference>
<dbReference type="Pfam" id="PF01177">
    <property type="entry name" value="Asp_Glu_race"/>
    <property type="match status" value="1"/>
</dbReference>
<dbReference type="SUPFAM" id="SSF53681">
    <property type="entry name" value="Aspartate/glutamate racemase"/>
    <property type="match status" value="2"/>
</dbReference>
<dbReference type="PROSITE" id="PS00923">
    <property type="entry name" value="ASP_GLU_RACEMASE_1"/>
    <property type="match status" value="1"/>
</dbReference>
<dbReference type="PROSITE" id="PS00924">
    <property type="entry name" value="ASP_GLU_RACEMASE_2"/>
    <property type="match status" value="1"/>
</dbReference>
<accession>P56868</accession>
<evidence type="ECO:0000250" key="1">
    <source>
        <dbReference type="UniProtKB" id="O58403"/>
    </source>
</evidence>
<evidence type="ECO:0000250" key="2">
    <source>
        <dbReference type="UniProtKB" id="P22634"/>
    </source>
</evidence>
<evidence type="ECO:0000255" key="3">
    <source>
        <dbReference type="HAMAP-Rule" id="MF_00258"/>
    </source>
</evidence>
<evidence type="ECO:0000269" key="4">
    <source>
    </source>
</evidence>
<evidence type="ECO:0000269" key="5">
    <source>
    </source>
</evidence>
<evidence type="ECO:0000303" key="6">
    <source>
    </source>
</evidence>
<evidence type="ECO:0007744" key="7">
    <source>
        <dbReference type="PDB" id="1B74"/>
    </source>
</evidence>
<evidence type="ECO:0007829" key="8">
    <source>
        <dbReference type="PDB" id="1B73"/>
    </source>
</evidence>
<evidence type="ECO:0007829" key="9">
    <source>
        <dbReference type="PDB" id="1B74"/>
    </source>
</evidence>
<protein>
    <recommendedName>
        <fullName evidence="3 6">Glutamate racemase</fullName>
        <ecNumber evidence="3 4 5">5.1.1.3</ecNumber>
    </recommendedName>
</protein>
<reference key="1">
    <citation type="journal article" date="1999" name="Extremophiles">
        <title>Molecular cloning, expression, and characterization of a thermostable glutamate racemase from a hyperthermophilic bacterium, Aquifex pyrophilus.</title>
        <authorList>
            <person name="Kim S.S."/>
            <person name="Choi I.G."/>
            <person name="Kim S.H."/>
            <person name="Yu Y.G."/>
        </authorList>
    </citation>
    <scope>NUCLEOTIDE SEQUENCE [GENOMIC DNA]</scope>
    <scope>CHARACTERIZATION</scope>
    <scope>SUBUNIT</scope>
    <scope>CATALYTIC ACTIVITY</scope>
</reference>
<reference key="2">
    <citation type="journal article" date="1999" name="Nat. Struct. Biol.">
        <title>Structure and mechanism of glutamate racemase from Aquifex pyrophilus.</title>
        <authorList>
            <person name="Hwang K.Y."/>
            <person name="Cho C.-S."/>
            <person name="Kim S.S."/>
            <person name="Sung H.-C."/>
            <person name="Yu Y.G."/>
            <person name="Cho Y."/>
        </authorList>
    </citation>
    <scope>X-RAY CRYSTALLOGRAPHY (2.3 ANGSTROMS) IN COMPLEX WITH GLUTAMATE</scope>
    <scope>CATALYTIC ACTIVITY</scope>
    <scope>SUBUNIT</scope>
    <scope>MUTAGENESIS OF ASP-7 AND GLU-147</scope>
</reference>
<comment type="function">
    <text>Provides the (R)-glutamate required for cell wall biosynthesis. Converts L- or D-glutamate to D- or L-glutamate, respectively, but not other amino acids such as alanine, aspartate, and glutamine.</text>
</comment>
<comment type="catalytic activity">
    <reaction evidence="3 4 5">
        <text>L-glutamate = D-glutamate</text>
        <dbReference type="Rhea" id="RHEA:12813"/>
        <dbReference type="ChEBI" id="CHEBI:29985"/>
        <dbReference type="ChEBI" id="CHEBI:29986"/>
        <dbReference type="EC" id="5.1.1.3"/>
    </reaction>
</comment>
<comment type="biophysicochemical properties">
    <temperatureDependence>
        <text>Thermostable.</text>
    </temperatureDependence>
</comment>
<comment type="pathway">
    <text evidence="3">Cell wall biogenesis; peptidoglycan biosynthesis.</text>
</comment>
<comment type="subunit">
    <text evidence="4 5">Homodimer.</text>
</comment>
<comment type="similarity">
    <text evidence="3">Belongs to the aspartate/glutamate racemases family.</text>
</comment>
<name>MURI_AQUPY</name>
<organism>
    <name type="scientific">Aquifex pyrophilus</name>
    <dbReference type="NCBI Taxonomy" id="2714"/>
    <lineage>
        <taxon>Bacteria</taxon>
        <taxon>Pseudomonadati</taxon>
        <taxon>Aquificota</taxon>
        <taxon>Aquificia</taxon>
        <taxon>Aquificales</taxon>
        <taxon>Aquificaceae</taxon>
        <taxon>Aquifex</taxon>
    </lineage>
</organism>
<proteinExistence type="evidence at protein level"/>
<sequence length="254" mass="27993">MKIGIFDSGVGGLTVLKAIRNRYRKVDIVYLGDTARVPYGIRSKDTIIRYSLECAGFLKDKGVDIIVVACNTASAYALERLKKEINVPVFGVIEPGVKEALKKSRNKKIGVIGTPATVKSGAYQRKLEEGGADVFAKACPLFVPLAEEGLLEGEITRKVVEHYLKEFKGKIDTLILGCTHYPLLKKEIKKFLGDVEVVDSSEALSLSLHNFIKDDGSSSLELFFTDLSPNLQFLIKLILGRDYPVKLAEGVFTH</sequence>
<keyword id="KW-0002">3D-structure</keyword>
<keyword id="KW-0133">Cell shape</keyword>
<keyword id="KW-0961">Cell wall biogenesis/degradation</keyword>
<keyword id="KW-0413">Isomerase</keyword>
<keyword id="KW-0573">Peptidoglycan synthesis</keyword>
<gene>
    <name evidence="3" type="primary">murI</name>
</gene>